<protein>
    <recommendedName>
        <fullName>Plasmid recombination enzyme type 2</fullName>
    </recommendedName>
    <alternativeName>
        <fullName>Mobilization protein</fullName>
    </alternativeName>
    <alternativeName>
        <fullName>Plasmid recombinase</fullName>
    </alternativeName>
</protein>
<proteinExistence type="inferred from homology"/>
<name>PRE2_STAAN</name>
<comment type="function">
    <text evidence="1">The interaction of the RSA site and the PRE protein may not only serves a function in plasmid maintenance, but may also contributes to the distribution of small antibiotic resistance plasmids among Gram-positive bacteria.</text>
</comment>
<comment type="miscellaneous">
    <text>Contains conserved positively charged amino acids probably involved in the binding of the pre protein to the RSA site.</text>
</comment>
<comment type="similarity">
    <text evidence="4">Belongs to the plasmid mobilization pre family.</text>
</comment>
<accession>P0A0C6</accession>
<accession>P22490</accession>
<accession>Q52091</accession>
<keyword id="KW-0238">DNA-binding</keyword>
<organism>
    <name type="scientific">Staphylococcus aureus (strain N315)</name>
    <dbReference type="NCBI Taxonomy" id="158879"/>
    <lineage>
        <taxon>Bacteria</taxon>
        <taxon>Bacillati</taxon>
        <taxon>Bacillota</taxon>
        <taxon>Bacilli</taxon>
        <taxon>Bacillales</taxon>
        <taxon>Staphylococcaceae</taxon>
        <taxon>Staphylococcus</taxon>
    </lineage>
</organism>
<feature type="chain" id="PRO_0000068422" description="Plasmid recombination enzyme type 2">
    <location>
        <begin position="1"/>
        <end position="420"/>
    </location>
</feature>
<feature type="region of interest" description="Disordered" evidence="3">
    <location>
        <begin position="388"/>
        <end position="420"/>
    </location>
</feature>
<feature type="binding site" evidence="2">
    <location>
        <position position="44"/>
    </location>
    <ligand>
        <name>DNA</name>
        <dbReference type="ChEBI" id="CHEBI:16991"/>
    </ligand>
</feature>
<feature type="binding site" evidence="2">
    <location>
        <position position="114"/>
    </location>
    <ligand>
        <name>DNA</name>
        <dbReference type="ChEBI" id="CHEBI:16991"/>
    </ligand>
</feature>
<dbReference type="EMBL" id="D86934">
    <property type="protein sequence ID" value="BAA82234.1"/>
    <property type="molecule type" value="Genomic_DNA"/>
</dbReference>
<dbReference type="EMBL" id="BA000018">
    <property type="protein sequence ID" value="BAB41247.1"/>
    <property type="molecule type" value="Genomic_DNA"/>
</dbReference>
<dbReference type="RefSeq" id="NP_040431.1">
    <property type="nucleotide sequence ID" value="NC_001384.1"/>
</dbReference>
<dbReference type="RefSeq" id="NP_863619.1">
    <property type="nucleotide sequence ID" value="NC_005024.1"/>
</dbReference>
<dbReference type="RefSeq" id="YP_002790914.1">
    <property type="nucleotide sequence ID" value="NC_012547.1"/>
</dbReference>
<dbReference type="RefSeq" id="YP_006937660.1">
    <property type="nucleotide sequence ID" value="NC_013320.1"/>
</dbReference>
<dbReference type="SMR" id="P0A0C6"/>
<dbReference type="EnsemblBacteria" id="BAB41247">
    <property type="protein sequence ID" value="BAB41247"/>
    <property type="gene ID" value="BAB41247"/>
</dbReference>
<dbReference type="KEGG" id="sau:SA0029"/>
<dbReference type="HOGENOM" id="CLU_035698_0_0_9"/>
<dbReference type="GO" id="GO:0003677">
    <property type="term" value="F:DNA binding"/>
    <property type="evidence" value="ECO:0007669"/>
    <property type="project" value="UniProtKB-KW"/>
</dbReference>
<dbReference type="GO" id="GO:0006310">
    <property type="term" value="P:DNA recombination"/>
    <property type="evidence" value="ECO:0007669"/>
    <property type="project" value="InterPro"/>
</dbReference>
<dbReference type="CDD" id="cd17242">
    <property type="entry name" value="MobM_relaxase"/>
    <property type="match status" value="1"/>
</dbReference>
<dbReference type="Gene3D" id="3.30.930.30">
    <property type="match status" value="1"/>
</dbReference>
<dbReference type="InterPro" id="IPR001668">
    <property type="entry name" value="Mob_Pre"/>
</dbReference>
<dbReference type="NCBIfam" id="NF041497">
    <property type="entry name" value="MobV"/>
    <property type="match status" value="1"/>
</dbReference>
<dbReference type="Pfam" id="PF01076">
    <property type="entry name" value="Mob_Pre"/>
    <property type="match status" value="1"/>
</dbReference>
<reference key="1">
    <citation type="journal article" date="1999" name="Antimicrob. Agents Chemother.">
        <title>Cloning and nucleotide sequence determination of the entire mec DNA of pre-methicillin-resistant Staphylococcus aureus N315.</title>
        <authorList>
            <person name="Ito T."/>
            <person name="Katayama Y."/>
            <person name="Hiramatsu K."/>
        </authorList>
    </citation>
    <scope>NUCLEOTIDE SEQUENCE [GENOMIC DNA]</scope>
</reference>
<reference key="2">
    <citation type="journal article" date="2001" name="Lancet">
        <title>Whole genome sequencing of meticillin-resistant Staphylococcus aureus.</title>
        <authorList>
            <person name="Kuroda M."/>
            <person name="Ohta T."/>
            <person name="Uchiyama I."/>
            <person name="Baba T."/>
            <person name="Yuzawa H."/>
            <person name="Kobayashi I."/>
            <person name="Cui L."/>
            <person name="Oguchi A."/>
            <person name="Aoki K."/>
            <person name="Nagai Y."/>
            <person name="Lian J.-Q."/>
            <person name="Ito T."/>
            <person name="Kanamori M."/>
            <person name="Matsumaru H."/>
            <person name="Maruyama A."/>
            <person name="Murakami H."/>
            <person name="Hosoyama A."/>
            <person name="Mizutani-Ui Y."/>
            <person name="Takahashi N.K."/>
            <person name="Sawano T."/>
            <person name="Inoue R."/>
            <person name="Kaito C."/>
            <person name="Sekimizu K."/>
            <person name="Hirakawa H."/>
            <person name="Kuhara S."/>
            <person name="Goto S."/>
            <person name="Yabuzaki J."/>
            <person name="Kanehisa M."/>
            <person name="Yamashita A."/>
            <person name="Oshima K."/>
            <person name="Furuya K."/>
            <person name="Yoshino C."/>
            <person name="Shiba T."/>
            <person name="Hattori M."/>
            <person name="Ogasawara N."/>
            <person name="Hayashi H."/>
            <person name="Hiramatsu K."/>
        </authorList>
    </citation>
    <scope>NUCLEOTIDE SEQUENCE [LARGE SCALE GENOMIC DNA]</scope>
    <source>
        <strain>N315</strain>
    </source>
</reference>
<sequence>MSYAVCRMQKVKSAGLKGMQFHNQRERKSRTNDDIDHERTRENYDLKNDKNIDYNERVKEIIESQKTGTRKTRKDAVLVNELLVTSDRDFFEQLDPGEQKRFFEESYKLFSERYGKQNIAYATVHNDEQTPHMHLGVVPMRDGKLQGKNVFNRQELLWLQDKFPEHMKKQGFELKRGERGSDRKHIETAKFKKQTLEKEIDFLEKNLAVKKDEWTAYSDKVKSDLEVPAKRHMKSVEVPTGEKSMFGLGKEIMKTEKKPTKNVVISERDYKNLVTAARDNDRLKQHVRNLMSTDMAREYKKLSKEHGQVKEKYSGLVERFNENVNDYNELLEENKSLKSKISDLKRDVSLIYESTKEFLKERTDGLKAFKNVFKGFVDKVKDKTAQFQEKHDLEPKKNEFELTHNREVKKERSRDQGMSL</sequence>
<evidence type="ECO:0000250" key="1"/>
<evidence type="ECO:0000255" key="2"/>
<evidence type="ECO:0000256" key="3">
    <source>
        <dbReference type="SAM" id="MobiDB-lite"/>
    </source>
</evidence>
<evidence type="ECO:0000305" key="4"/>
<gene>
    <name type="primary">pre</name>
    <name type="synonym">mob</name>
    <name type="ordered locus">SA0029</name>
</gene>